<keyword id="KW-0067">ATP-binding</keyword>
<keyword id="KW-0963">Cytoplasm</keyword>
<keyword id="KW-0324">Glycolysis</keyword>
<keyword id="KW-0418">Kinase</keyword>
<keyword id="KW-0547">Nucleotide-binding</keyword>
<keyword id="KW-0808">Transferase</keyword>
<dbReference type="EC" id="2.7.2.3" evidence="1"/>
<dbReference type="EMBL" id="CT573326">
    <property type="protein sequence ID" value="CAK17656.1"/>
    <property type="molecule type" value="Genomic_DNA"/>
</dbReference>
<dbReference type="RefSeq" id="WP_011536016.1">
    <property type="nucleotide sequence ID" value="NC_008027.1"/>
</dbReference>
<dbReference type="SMR" id="Q1I3Y0"/>
<dbReference type="STRING" id="384676.PSEEN5022"/>
<dbReference type="GeneID" id="32807961"/>
<dbReference type="KEGG" id="pen:PSEEN5022"/>
<dbReference type="eggNOG" id="COG0126">
    <property type="taxonomic scope" value="Bacteria"/>
</dbReference>
<dbReference type="HOGENOM" id="CLU_025427_0_2_6"/>
<dbReference type="OrthoDB" id="9808460at2"/>
<dbReference type="UniPathway" id="UPA00109">
    <property type="reaction ID" value="UER00185"/>
</dbReference>
<dbReference type="Proteomes" id="UP000000658">
    <property type="component" value="Chromosome"/>
</dbReference>
<dbReference type="GO" id="GO:0005829">
    <property type="term" value="C:cytosol"/>
    <property type="evidence" value="ECO:0007669"/>
    <property type="project" value="TreeGrafter"/>
</dbReference>
<dbReference type="GO" id="GO:0043531">
    <property type="term" value="F:ADP binding"/>
    <property type="evidence" value="ECO:0007669"/>
    <property type="project" value="TreeGrafter"/>
</dbReference>
<dbReference type="GO" id="GO:0005524">
    <property type="term" value="F:ATP binding"/>
    <property type="evidence" value="ECO:0007669"/>
    <property type="project" value="UniProtKB-KW"/>
</dbReference>
<dbReference type="GO" id="GO:0004618">
    <property type="term" value="F:phosphoglycerate kinase activity"/>
    <property type="evidence" value="ECO:0007669"/>
    <property type="project" value="UniProtKB-UniRule"/>
</dbReference>
<dbReference type="GO" id="GO:0006094">
    <property type="term" value="P:gluconeogenesis"/>
    <property type="evidence" value="ECO:0007669"/>
    <property type="project" value="TreeGrafter"/>
</dbReference>
<dbReference type="GO" id="GO:0006096">
    <property type="term" value="P:glycolytic process"/>
    <property type="evidence" value="ECO:0007669"/>
    <property type="project" value="UniProtKB-UniRule"/>
</dbReference>
<dbReference type="FunFam" id="3.40.50.1260:FF:000001">
    <property type="entry name" value="Phosphoglycerate kinase"/>
    <property type="match status" value="1"/>
</dbReference>
<dbReference type="FunFam" id="3.40.50.1260:FF:000002">
    <property type="entry name" value="Phosphoglycerate kinase"/>
    <property type="match status" value="1"/>
</dbReference>
<dbReference type="Gene3D" id="3.40.50.1260">
    <property type="entry name" value="Phosphoglycerate kinase, N-terminal domain"/>
    <property type="match status" value="2"/>
</dbReference>
<dbReference type="HAMAP" id="MF_00145">
    <property type="entry name" value="Phosphoglyc_kinase"/>
    <property type="match status" value="1"/>
</dbReference>
<dbReference type="InterPro" id="IPR001576">
    <property type="entry name" value="Phosphoglycerate_kinase"/>
</dbReference>
<dbReference type="InterPro" id="IPR015911">
    <property type="entry name" value="Phosphoglycerate_kinase_CS"/>
</dbReference>
<dbReference type="InterPro" id="IPR015824">
    <property type="entry name" value="Phosphoglycerate_kinase_N"/>
</dbReference>
<dbReference type="InterPro" id="IPR036043">
    <property type="entry name" value="Phosphoglycerate_kinase_sf"/>
</dbReference>
<dbReference type="PANTHER" id="PTHR11406">
    <property type="entry name" value="PHOSPHOGLYCERATE KINASE"/>
    <property type="match status" value="1"/>
</dbReference>
<dbReference type="PANTHER" id="PTHR11406:SF23">
    <property type="entry name" value="PHOSPHOGLYCERATE KINASE 1, CHLOROPLASTIC-RELATED"/>
    <property type="match status" value="1"/>
</dbReference>
<dbReference type="Pfam" id="PF00162">
    <property type="entry name" value="PGK"/>
    <property type="match status" value="1"/>
</dbReference>
<dbReference type="PIRSF" id="PIRSF000724">
    <property type="entry name" value="Pgk"/>
    <property type="match status" value="1"/>
</dbReference>
<dbReference type="PRINTS" id="PR00477">
    <property type="entry name" value="PHGLYCKINASE"/>
</dbReference>
<dbReference type="SUPFAM" id="SSF53748">
    <property type="entry name" value="Phosphoglycerate kinase"/>
    <property type="match status" value="1"/>
</dbReference>
<dbReference type="PROSITE" id="PS00111">
    <property type="entry name" value="PGLYCERATE_KINASE"/>
    <property type="match status" value="1"/>
</dbReference>
<accession>Q1I3Y0</accession>
<protein>
    <recommendedName>
        <fullName evidence="1">Phosphoglycerate kinase</fullName>
        <ecNumber evidence="1">2.7.2.3</ecNumber>
    </recommendedName>
</protein>
<proteinExistence type="inferred from homology"/>
<gene>
    <name evidence="1" type="primary">pgk</name>
    <name type="ordered locus">PSEEN5022</name>
</gene>
<sequence length="387" mass="40120">MTVLKMTDLDLQGKRVLIREDLNVPVKDGVVTSDARILAALPTIKLALEKGAAVMVCSHLGRPTEGEFSEENSLKPVAAYLSKALGREVPLVADYLDGVEVKAGDLVLFENVRFNKGEKKNADELAQKYAALCDVFVMDAFGTAHRAEGSTHGVAKFAKVATAGPLLAAELDALGKALKAPAKPMAAIVAGSKVSTKLDVLNSLSTVCDQLIVGGGIANTFLAAAGHPVGKSLYEPDLVETAKAIAAKVSVPLPVDVVVAKAFAEDAEATVKAIADVAADDMILDIGPKTAEQFAELLKTSKTILWNGPVGVFEFDQFGNGTKVLAKAIADSAAFSIAGGGDTLAAIDKYGVGADISYISTGGGAFLEFVEGKVLPAVAILEERAKA</sequence>
<feature type="chain" id="PRO_1000058037" description="Phosphoglycerate kinase">
    <location>
        <begin position="1"/>
        <end position="387"/>
    </location>
</feature>
<feature type="binding site" evidence="1">
    <location>
        <begin position="21"/>
        <end position="23"/>
    </location>
    <ligand>
        <name>substrate</name>
    </ligand>
</feature>
<feature type="binding site" evidence="1">
    <location>
        <position position="36"/>
    </location>
    <ligand>
        <name>substrate</name>
    </ligand>
</feature>
<feature type="binding site" evidence="1">
    <location>
        <begin position="59"/>
        <end position="62"/>
    </location>
    <ligand>
        <name>substrate</name>
    </ligand>
</feature>
<feature type="binding site" evidence="1">
    <location>
        <position position="113"/>
    </location>
    <ligand>
        <name>substrate</name>
    </ligand>
</feature>
<feature type="binding site" evidence="1">
    <location>
        <position position="146"/>
    </location>
    <ligand>
        <name>substrate</name>
    </ligand>
</feature>
<feature type="binding site" evidence="1">
    <location>
        <position position="197"/>
    </location>
    <ligand>
        <name>ATP</name>
        <dbReference type="ChEBI" id="CHEBI:30616"/>
    </ligand>
</feature>
<feature type="binding site" evidence="1">
    <location>
        <position position="314"/>
    </location>
    <ligand>
        <name>ATP</name>
        <dbReference type="ChEBI" id="CHEBI:30616"/>
    </ligand>
</feature>
<feature type="binding site" evidence="1">
    <location>
        <begin position="340"/>
        <end position="343"/>
    </location>
    <ligand>
        <name>ATP</name>
        <dbReference type="ChEBI" id="CHEBI:30616"/>
    </ligand>
</feature>
<reference key="1">
    <citation type="journal article" date="2006" name="Nat. Biotechnol.">
        <title>Complete genome sequence of the entomopathogenic and metabolically versatile soil bacterium Pseudomonas entomophila.</title>
        <authorList>
            <person name="Vodovar N."/>
            <person name="Vallenet D."/>
            <person name="Cruveiller S."/>
            <person name="Rouy Z."/>
            <person name="Barbe V."/>
            <person name="Acosta C."/>
            <person name="Cattolico L."/>
            <person name="Jubin C."/>
            <person name="Lajus A."/>
            <person name="Segurens B."/>
            <person name="Vacherie B."/>
            <person name="Wincker P."/>
            <person name="Weissenbach J."/>
            <person name="Lemaitre B."/>
            <person name="Medigue C."/>
            <person name="Boccard F."/>
        </authorList>
    </citation>
    <scope>NUCLEOTIDE SEQUENCE [LARGE SCALE GENOMIC DNA]</scope>
    <source>
        <strain>L48</strain>
    </source>
</reference>
<comment type="catalytic activity">
    <reaction evidence="1">
        <text>(2R)-3-phosphoglycerate + ATP = (2R)-3-phospho-glyceroyl phosphate + ADP</text>
        <dbReference type="Rhea" id="RHEA:14801"/>
        <dbReference type="ChEBI" id="CHEBI:30616"/>
        <dbReference type="ChEBI" id="CHEBI:57604"/>
        <dbReference type="ChEBI" id="CHEBI:58272"/>
        <dbReference type="ChEBI" id="CHEBI:456216"/>
        <dbReference type="EC" id="2.7.2.3"/>
    </reaction>
</comment>
<comment type="pathway">
    <text evidence="1">Carbohydrate degradation; glycolysis; pyruvate from D-glyceraldehyde 3-phosphate: step 2/5.</text>
</comment>
<comment type="subunit">
    <text evidence="1">Monomer.</text>
</comment>
<comment type="subcellular location">
    <subcellularLocation>
        <location evidence="1">Cytoplasm</location>
    </subcellularLocation>
</comment>
<comment type="similarity">
    <text evidence="1">Belongs to the phosphoglycerate kinase family.</text>
</comment>
<evidence type="ECO:0000255" key="1">
    <source>
        <dbReference type="HAMAP-Rule" id="MF_00145"/>
    </source>
</evidence>
<name>PGK_PSEE4</name>
<organism>
    <name type="scientific">Pseudomonas entomophila (strain L48)</name>
    <dbReference type="NCBI Taxonomy" id="384676"/>
    <lineage>
        <taxon>Bacteria</taxon>
        <taxon>Pseudomonadati</taxon>
        <taxon>Pseudomonadota</taxon>
        <taxon>Gammaproteobacteria</taxon>
        <taxon>Pseudomonadales</taxon>
        <taxon>Pseudomonadaceae</taxon>
        <taxon>Pseudomonas</taxon>
    </lineage>
</organism>